<protein>
    <recommendedName>
        <fullName evidence="10">G-protein coupled receptor 62</fullName>
    </recommendedName>
    <alternativeName>
        <fullName>G-protein coupled receptor GPCR8</fullName>
        <shortName>hGPCR8</shortName>
    </alternativeName>
    <alternativeName>
        <fullName>G-protein coupled receptor KPG_005</fullName>
    </alternativeName>
</protein>
<keyword id="KW-1003">Cell membrane</keyword>
<keyword id="KW-0967">Endosome</keyword>
<keyword id="KW-0297">G-protein coupled receptor</keyword>
<keyword id="KW-0325">Glycoprotein</keyword>
<keyword id="KW-0472">Membrane</keyword>
<keyword id="KW-1267">Proteomics identification</keyword>
<keyword id="KW-0675">Receptor</keyword>
<keyword id="KW-1185">Reference proteome</keyword>
<keyword id="KW-0807">Transducer</keyword>
<keyword id="KW-0812">Transmembrane</keyword>
<keyword id="KW-1133">Transmembrane helix</keyword>
<feature type="chain" id="PRO_0000069580" description="G-protein coupled receptor 62">
    <location>
        <begin position="1"/>
        <end position="368"/>
    </location>
</feature>
<feature type="topological domain" description="Extracellular" evidence="2">
    <location>
        <begin position="1"/>
        <end position="18"/>
    </location>
</feature>
<feature type="transmembrane region" description="Helical; Name=1" evidence="2">
    <location>
        <begin position="19"/>
        <end position="39"/>
    </location>
</feature>
<feature type="topological domain" description="Cytoplasmic" evidence="2">
    <location>
        <begin position="40"/>
        <end position="53"/>
    </location>
</feature>
<feature type="transmembrane region" description="Helical; Name=2" evidence="2">
    <location>
        <begin position="54"/>
        <end position="74"/>
    </location>
</feature>
<feature type="topological domain" description="Extracellular" evidence="2">
    <location>
        <begin position="75"/>
        <end position="91"/>
    </location>
</feature>
<feature type="transmembrane region" description="Helical; Name=3" evidence="2">
    <location>
        <begin position="92"/>
        <end position="112"/>
    </location>
</feature>
<feature type="topological domain" description="Cytoplasmic" evidence="2">
    <location>
        <begin position="113"/>
        <end position="129"/>
    </location>
</feature>
<feature type="transmembrane region" description="Helical; Name=4" evidence="2">
    <location>
        <begin position="130"/>
        <end position="150"/>
    </location>
</feature>
<feature type="topological domain" description="Extracellular" evidence="2">
    <location>
        <begin position="151"/>
        <end position="177"/>
    </location>
</feature>
<feature type="transmembrane region" description="Helical; Name=5" evidence="2">
    <location>
        <begin position="178"/>
        <end position="198"/>
    </location>
</feature>
<feature type="topological domain" description="Cytoplasmic" evidence="2">
    <location>
        <begin position="199"/>
        <end position="239"/>
    </location>
</feature>
<feature type="transmembrane region" description="Helical; Name=6" evidence="2">
    <location>
        <begin position="240"/>
        <end position="260"/>
    </location>
</feature>
<feature type="topological domain" description="Extracellular" evidence="2">
    <location>
        <begin position="261"/>
        <end position="272"/>
    </location>
</feature>
<feature type="transmembrane region" description="Helical; Name=7" evidence="2">
    <location>
        <begin position="273"/>
        <end position="293"/>
    </location>
</feature>
<feature type="topological domain" description="Cytoplasmic" evidence="2">
    <location>
        <begin position="294"/>
        <end position="368"/>
    </location>
</feature>
<feature type="region of interest" description="Disordered" evidence="4">
    <location>
        <begin position="332"/>
        <end position="368"/>
    </location>
</feature>
<feature type="glycosylation site" description="N-linked (GlcNAc...) asparagine" evidence="2">
    <location>
        <position position="3"/>
    </location>
</feature>
<feature type="glycosylation site" description="N-linked (GlcNAc...) asparagine" evidence="2">
    <location>
        <position position="8"/>
    </location>
</feature>
<feature type="sequence variant" id="VAR_067702" description="In dbSNP:rs28587738." evidence="5 7 8 9">
    <original>T</original>
    <variation>P</variation>
    <location>
        <position position="151"/>
    </location>
</feature>
<feature type="sequence variant" id="VAR_067703" description="In dbSNP:rs28651222." evidence="5 7 8 9">
    <original>H</original>
    <variation>R</variation>
    <location>
        <position position="216"/>
    </location>
</feature>
<feature type="sequence variant" id="VAR_055920" description="In dbSNP:rs323871.">
    <original>V</original>
    <variation>L</variation>
    <location>
        <position position="313"/>
    </location>
</feature>
<organism>
    <name type="scientific">Homo sapiens</name>
    <name type="common">Human</name>
    <dbReference type="NCBI Taxonomy" id="9606"/>
    <lineage>
        <taxon>Eukaryota</taxon>
        <taxon>Metazoa</taxon>
        <taxon>Chordata</taxon>
        <taxon>Craniata</taxon>
        <taxon>Vertebrata</taxon>
        <taxon>Euteleostomi</taxon>
        <taxon>Mammalia</taxon>
        <taxon>Eutheria</taxon>
        <taxon>Euarchontoglires</taxon>
        <taxon>Primates</taxon>
        <taxon>Haplorrhini</taxon>
        <taxon>Catarrhini</taxon>
        <taxon>Hominidae</taxon>
        <taxon>Homo</taxon>
    </lineage>
</organism>
<reference key="1">
    <citation type="journal article" date="2001" name="Brain Res. Mol. Brain Res.">
        <title>Identification of four novel human G protein-coupled receptors expressed in the brain.</title>
        <authorList>
            <person name="Lee D.K."/>
            <person name="George S.R."/>
            <person name="Cheng R."/>
            <person name="Nguyen T."/>
            <person name="Liu Y."/>
            <person name="Brown M."/>
            <person name="Lynch K.R."/>
            <person name="O'Dowd B.F."/>
        </authorList>
    </citation>
    <scope>NUCLEOTIDE SEQUENCE [GENOMIC DNA]</scope>
    <scope>VARIANTS PRO-151 AND ARG-216</scope>
    <scope>TISSUE SPECIFICITY</scope>
</reference>
<reference key="2">
    <citation type="submission" date="1999-09" db="EMBL/GenBank/DDBJ databases">
        <title>Probable G-protein coupled receptor.</title>
        <authorList>
            <person name="Urakawa I."/>
            <person name="Okazaki H."/>
        </authorList>
    </citation>
    <scope>NUCLEOTIDE SEQUENCE [MRNA]</scope>
    <scope>VARIANTS PRO-151 AND ARG-216</scope>
</reference>
<reference key="3">
    <citation type="submission" date="2010-12" db="EMBL/GenBank/DDBJ databases">
        <title>Isolation of cDNA coding for multiple human genes.</title>
        <authorList>
            <person name="Sutterer S.M."/>
            <person name="Kaighin V.A."/>
            <person name="Martin A.L."/>
            <person name="Aronstam R.S."/>
        </authorList>
    </citation>
    <scope>NUCLEOTIDE SEQUENCE [MRNA]</scope>
    <scope>VARIANTS PRO-151 AND ARG-216</scope>
    <source>
        <tissue>Brain</tissue>
    </source>
</reference>
<reference key="4">
    <citation type="journal article" date="2002" name="FEBS Lett.">
        <title>Identification of G protein-coupled receptor genes from the human genome sequence.</title>
        <authorList>
            <person name="Takeda S."/>
            <person name="Kadowaki S."/>
            <person name="Haga T."/>
            <person name="Takaesu H."/>
            <person name="Mitaku S."/>
        </authorList>
    </citation>
    <scope>NUCLEOTIDE SEQUENCE [LARGE SCALE GENOMIC DNA]</scope>
</reference>
<reference key="5">
    <citation type="journal article" date="2006" name="Nature">
        <title>The DNA sequence, annotation and analysis of human chromosome 3.</title>
        <authorList>
            <person name="Muzny D.M."/>
            <person name="Scherer S.E."/>
            <person name="Kaul R."/>
            <person name="Wang J."/>
            <person name="Yu J."/>
            <person name="Sudbrak R."/>
            <person name="Buhay C.J."/>
            <person name="Chen R."/>
            <person name="Cree A."/>
            <person name="Ding Y."/>
            <person name="Dugan-Rocha S."/>
            <person name="Gill R."/>
            <person name="Gunaratne P."/>
            <person name="Harris R.A."/>
            <person name="Hawes A.C."/>
            <person name="Hernandez J."/>
            <person name="Hodgson A.V."/>
            <person name="Hume J."/>
            <person name="Jackson A."/>
            <person name="Khan Z.M."/>
            <person name="Kovar-Smith C."/>
            <person name="Lewis L.R."/>
            <person name="Lozado R.J."/>
            <person name="Metzker M.L."/>
            <person name="Milosavljevic A."/>
            <person name="Miner G.R."/>
            <person name="Morgan M.B."/>
            <person name="Nazareth L.V."/>
            <person name="Scott G."/>
            <person name="Sodergren E."/>
            <person name="Song X.-Z."/>
            <person name="Steffen D."/>
            <person name="Wei S."/>
            <person name="Wheeler D.A."/>
            <person name="Wright M.W."/>
            <person name="Worley K.C."/>
            <person name="Yuan Y."/>
            <person name="Zhang Z."/>
            <person name="Adams C.Q."/>
            <person name="Ansari-Lari M.A."/>
            <person name="Ayele M."/>
            <person name="Brown M.J."/>
            <person name="Chen G."/>
            <person name="Chen Z."/>
            <person name="Clendenning J."/>
            <person name="Clerc-Blankenburg K.P."/>
            <person name="Chen R."/>
            <person name="Chen Z."/>
            <person name="Davis C."/>
            <person name="Delgado O."/>
            <person name="Dinh H.H."/>
            <person name="Dong W."/>
            <person name="Draper H."/>
            <person name="Ernst S."/>
            <person name="Fu G."/>
            <person name="Gonzalez-Garay M.L."/>
            <person name="Garcia D.K."/>
            <person name="Gillett W."/>
            <person name="Gu J."/>
            <person name="Hao B."/>
            <person name="Haugen E."/>
            <person name="Havlak P."/>
            <person name="He X."/>
            <person name="Hennig S."/>
            <person name="Hu S."/>
            <person name="Huang W."/>
            <person name="Jackson L.R."/>
            <person name="Jacob L.S."/>
            <person name="Kelly S.H."/>
            <person name="Kube M."/>
            <person name="Levy R."/>
            <person name="Li Z."/>
            <person name="Liu B."/>
            <person name="Liu J."/>
            <person name="Liu W."/>
            <person name="Lu J."/>
            <person name="Maheshwari M."/>
            <person name="Nguyen B.-V."/>
            <person name="Okwuonu G.O."/>
            <person name="Palmeiri A."/>
            <person name="Pasternak S."/>
            <person name="Perez L.M."/>
            <person name="Phelps K.A."/>
            <person name="Plopper F.J."/>
            <person name="Qiang B."/>
            <person name="Raymond C."/>
            <person name="Rodriguez R."/>
            <person name="Saenphimmachak C."/>
            <person name="Santibanez J."/>
            <person name="Shen H."/>
            <person name="Shen Y."/>
            <person name="Subramanian S."/>
            <person name="Tabor P.E."/>
            <person name="Verduzco D."/>
            <person name="Waldron L."/>
            <person name="Wang J."/>
            <person name="Wang J."/>
            <person name="Wang Q."/>
            <person name="Williams G.A."/>
            <person name="Wong G.K.-S."/>
            <person name="Yao Z."/>
            <person name="Zhang J."/>
            <person name="Zhang X."/>
            <person name="Zhao G."/>
            <person name="Zhou J."/>
            <person name="Zhou Y."/>
            <person name="Nelson D."/>
            <person name="Lehrach H."/>
            <person name="Reinhardt R."/>
            <person name="Naylor S.L."/>
            <person name="Yang H."/>
            <person name="Olson M."/>
            <person name="Weinstock G."/>
            <person name="Gibbs R.A."/>
        </authorList>
    </citation>
    <scope>NUCLEOTIDE SEQUENCE [LARGE SCALE GENOMIC DNA]</scope>
</reference>
<reference key="6">
    <citation type="submission" date="2005-07" db="EMBL/GenBank/DDBJ databases">
        <authorList>
            <person name="Mural R.J."/>
            <person name="Istrail S."/>
            <person name="Sutton G.G."/>
            <person name="Florea L."/>
            <person name="Halpern A.L."/>
            <person name="Mobarry C.M."/>
            <person name="Lippert R."/>
            <person name="Walenz B."/>
            <person name="Shatkay H."/>
            <person name="Dew I."/>
            <person name="Miller J.R."/>
            <person name="Flanigan M.J."/>
            <person name="Edwards N.J."/>
            <person name="Bolanos R."/>
            <person name="Fasulo D."/>
            <person name="Halldorsson B.V."/>
            <person name="Hannenhalli S."/>
            <person name="Turner R."/>
            <person name="Yooseph S."/>
            <person name="Lu F."/>
            <person name="Nusskern D.R."/>
            <person name="Shue B.C."/>
            <person name="Zheng X.H."/>
            <person name="Zhong F."/>
            <person name="Delcher A.L."/>
            <person name="Huson D.H."/>
            <person name="Kravitz S.A."/>
            <person name="Mouchard L."/>
            <person name="Reinert K."/>
            <person name="Remington K.A."/>
            <person name="Clark A.G."/>
            <person name="Waterman M.S."/>
            <person name="Eichler E.E."/>
            <person name="Adams M.D."/>
            <person name="Hunkapiller M.W."/>
            <person name="Myers E.W."/>
            <person name="Venter J.C."/>
        </authorList>
    </citation>
    <scope>NUCLEOTIDE SEQUENCE [LARGE SCALE GENOMIC DNA]</scope>
    <scope>VARIANTS PRO-151 AND ARG-216</scope>
</reference>
<reference key="7">
    <citation type="journal article" date="2017" name="Sci. Rep.">
        <title>Orphan GPR61, GPR62 and GPR135 receptors and the melatonin MT2 receptor reciprocally modulate their signaling functions.</title>
        <authorList>
            <person name="Oishi A."/>
            <person name="Karamitri A."/>
            <person name="Gerbier R."/>
            <person name="Lahuna O."/>
            <person name="Ahmad R."/>
            <person name="Jockers R."/>
        </authorList>
    </citation>
    <scope>SUBCELLULAR LOCATION</scope>
    <scope>SUBUNIT</scope>
    <scope>FUNCTION</scope>
    <scope>INTERACTION WITH MTNR1B</scope>
    <scope>INTERACTION WITH ARRB1 AND ARRB2</scope>
</reference>
<evidence type="ECO:0000250" key="1">
    <source>
        <dbReference type="UniProtKB" id="Q80UC6"/>
    </source>
</evidence>
<evidence type="ECO:0000255" key="2"/>
<evidence type="ECO:0000255" key="3">
    <source>
        <dbReference type="PROSITE-ProRule" id="PRU00521"/>
    </source>
</evidence>
<evidence type="ECO:0000256" key="4">
    <source>
        <dbReference type="SAM" id="MobiDB-lite"/>
    </source>
</evidence>
<evidence type="ECO:0000269" key="5">
    <source>
    </source>
</evidence>
<evidence type="ECO:0000269" key="6">
    <source>
    </source>
</evidence>
<evidence type="ECO:0000269" key="7">
    <source ref="2"/>
</evidence>
<evidence type="ECO:0000269" key="8">
    <source ref="3"/>
</evidence>
<evidence type="ECO:0000269" key="9">
    <source ref="6"/>
</evidence>
<evidence type="ECO:0000305" key="10"/>
<proteinExistence type="evidence at protein level"/>
<name>GPR62_HUMAN</name>
<comment type="function">
    <text evidence="6">Orphan G-protein coupled receptor. Constitutively activates the G(q/11)/inositol phosphate and the G(s)-alpha/cAMP signaling pathways (PubMed:28827538). Has spontaneous activity for beta-arrestin recruitment (PubMed:28827538). Shows a reciprocal modulation of signaling functions with the melatonin receptor MTNR1B most likely through receptor heteromerization (PubMed:28827538).</text>
</comment>
<comment type="subunit">
    <text evidence="1 6">Homodimers (By similarity). Forms heterodimer with MTNR1B (PubMed:28827538). Interacts with ARRB1 and ARRB2 in a spontaneous and agonist-independent manner; leading to the internalization of GPR62 in the endosomal compartment (PubMed:28827538).</text>
</comment>
<comment type="subcellular location">
    <subcellularLocation>
        <location evidence="6">Cell membrane</location>
        <topology evidence="2">Multi-pass membrane protein</topology>
    </subcellularLocation>
    <subcellularLocation>
        <location evidence="6">Endosome membrane</location>
        <topology evidence="2">Multi-pass membrane protein</topology>
    </subcellularLocation>
    <text evidence="6">Colocalizes with ARRB2 in the endosome (PubMed:28827538).</text>
</comment>
<comment type="tissue specificity">
    <text evidence="5">Expressed in brain; detected in the basal forebrain, frontal cortex, caudate, putamen, thalamus and hippocampus.</text>
</comment>
<comment type="domain">
    <text evidence="1">Lacks the conserved DRY and BBXXB motifs. The restoration of these motifs affects its constitutive activity.</text>
</comment>
<comment type="similarity">
    <text evidence="3">Belongs to the G-protein coupled receptor 1 family.</text>
</comment>
<dbReference type="EMBL" id="AF317653">
    <property type="protein sequence ID" value="AAK12638.1"/>
    <property type="molecule type" value="Genomic_DNA"/>
</dbReference>
<dbReference type="EMBL" id="AB032600">
    <property type="protein sequence ID" value="BAD83591.1"/>
    <property type="molecule type" value="mRNA"/>
</dbReference>
<dbReference type="EMBL" id="HQ709188">
    <property type="protein sequence ID" value="ADZ17395.1"/>
    <property type="molecule type" value="mRNA"/>
</dbReference>
<dbReference type="EMBL" id="AB083590">
    <property type="protein sequence ID" value="BAB89303.1"/>
    <property type="molecule type" value="Genomic_DNA"/>
</dbReference>
<dbReference type="EMBL" id="AC115284">
    <property type="status" value="NOT_ANNOTATED_CDS"/>
    <property type="molecule type" value="Genomic_DNA"/>
</dbReference>
<dbReference type="EMBL" id="CH471055">
    <property type="protein sequence ID" value="EAW65164.1"/>
    <property type="molecule type" value="Genomic_DNA"/>
</dbReference>
<dbReference type="CCDS" id="CCDS2838.1"/>
<dbReference type="RefSeq" id="NP_543141.3">
    <property type="nucleotide sequence ID" value="NM_080865.3"/>
</dbReference>
<dbReference type="SMR" id="Q9BZJ7"/>
<dbReference type="CORUM" id="Q9BZJ7"/>
<dbReference type="FunCoup" id="Q9BZJ7">
    <property type="interactions" value="112"/>
</dbReference>
<dbReference type="IntAct" id="Q9BZJ7">
    <property type="interactions" value="1"/>
</dbReference>
<dbReference type="MINT" id="Q9BZJ7"/>
<dbReference type="STRING" id="9606.ENSP00000319250"/>
<dbReference type="ChEMBL" id="CHEMBL4523917"/>
<dbReference type="GlyCosmos" id="Q9BZJ7">
    <property type="glycosylation" value="2 sites, No reported glycans"/>
</dbReference>
<dbReference type="GlyGen" id="Q9BZJ7">
    <property type="glycosylation" value="2 sites"/>
</dbReference>
<dbReference type="PhosphoSitePlus" id="Q9BZJ7"/>
<dbReference type="BioMuta" id="GPR62"/>
<dbReference type="DMDM" id="296434526"/>
<dbReference type="MassIVE" id="Q9BZJ7"/>
<dbReference type="PaxDb" id="9606-ENSP00000319250"/>
<dbReference type="PeptideAtlas" id="Q9BZJ7"/>
<dbReference type="Antibodypedia" id="14225">
    <property type="antibodies" value="220 antibodies from 29 providers"/>
</dbReference>
<dbReference type="DNASU" id="118442"/>
<dbReference type="Ensembl" id="ENST00000322241.6">
    <property type="protein sequence ID" value="ENSP00000319250.4"/>
    <property type="gene ID" value="ENSG00000180929.6"/>
</dbReference>
<dbReference type="GeneID" id="118442"/>
<dbReference type="KEGG" id="hsa:118442"/>
<dbReference type="MANE-Select" id="ENST00000322241.6">
    <property type="protein sequence ID" value="ENSP00000319250.4"/>
    <property type="RefSeq nucleotide sequence ID" value="NM_080865.4"/>
    <property type="RefSeq protein sequence ID" value="NP_543141.3"/>
</dbReference>
<dbReference type="UCSC" id="uc003dca.4">
    <property type="organism name" value="human"/>
</dbReference>
<dbReference type="AGR" id="HGNC:13301"/>
<dbReference type="CTD" id="118442"/>
<dbReference type="GeneCards" id="GPR62"/>
<dbReference type="HGNC" id="HGNC:13301">
    <property type="gene designation" value="GPR62"/>
</dbReference>
<dbReference type="HPA" id="ENSG00000180929">
    <property type="expression patterns" value="Tissue enriched (brain)"/>
</dbReference>
<dbReference type="MIM" id="606917">
    <property type="type" value="gene"/>
</dbReference>
<dbReference type="neXtProt" id="NX_Q9BZJ7"/>
<dbReference type="OpenTargets" id="ENSG00000180929"/>
<dbReference type="PharmGKB" id="PA28906"/>
<dbReference type="VEuPathDB" id="HostDB:ENSG00000180929"/>
<dbReference type="eggNOG" id="KOG3656">
    <property type="taxonomic scope" value="Eukaryota"/>
</dbReference>
<dbReference type="GeneTree" id="ENSGT00950000182998"/>
<dbReference type="HOGENOM" id="CLU_067115_0_0_1"/>
<dbReference type="InParanoid" id="Q9BZJ7"/>
<dbReference type="OMA" id="FRPLWAM"/>
<dbReference type="OrthoDB" id="6117944at2759"/>
<dbReference type="PAN-GO" id="Q9BZJ7">
    <property type="GO annotations" value="5 GO annotations based on evolutionary models"/>
</dbReference>
<dbReference type="PhylomeDB" id="Q9BZJ7"/>
<dbReference type="TreeFam" id="TF332667"/>
<dbReference type="PathwayCommons" id="Q9BZJ7"/>
<dbReference type="SignaLink" id="Q9BZJ7"/>
<dbReference type="BioGRID-ORCS" id="118442">
    <property type="hits" value="10 hits in 1143 CRISPR screens"/>
</dbReference>
<dbReference type="ChiTaRS" id="GPR62">
    <property type="organism name" value="human"/>
</dbReference>
<dbReference type="GeneWiki" id="GPR62"/>
<dbReference type="GenomeRNAi" id="118442"/>
<dbReference type="Pharos" id="Q9BZJ7">
    <property type="development level" value="Tbio"/>
</dbReference>
<dbReference type="PRO" id="PR:Q9BZJ7"/>
<dbReference type="Proteomes" id="UP000005640">
    <property type="component" value="Chromosome 3"/>
</dbReference>
<dbReference type="RNAct" id="Q9BZJ7">
    <property type="molecule type" value="protein"/>
</dbReference>
<dbReference type="Bgee" id="ENSG00000180929">
    <property type="expression patterns" value="Expressed in inferior vagus X ganglion and 85 other cell types or tissues"/>
</dbReference>
<dbReference type="GO" id="GO:0005768">
    <property type="term" value="C:endosome"/>
    <property type="evidence" value="ECO:0000314"/>
    <property type="project" value="UniProtKB"/>
</dbReference>
<dbReference type="GO" id="GO:0010008">
    <property type="term" value="C:endosome membrane"/>
    <property type="evidence" value="ECO:0007669"/>
    <property type="project" value="UniProtKB-SubCell"/>
</dbReference>
<dbReference type="GO" id="GO:0005886">
    <property type="term" value="C:plasma membrane"/>
    <property type="evidence" value="ECO:0000314"/>
    <property type="project" value="UniProtKB"/>
</dbReference>
<dbReference type="GO" id="GO:0043235">
    <property type="term" value="C:receptor complex"/>
    <property type="evidence" value="ECO:0000314"/>
    <property type="project" value="MGI"/>
</dbReference>
<dbReference type="GO" id="GO:1990763">
    <property type="term" value="F:arrestin family protein binding"/>
    <property type="evidence" value="ECO:0000314"/>
    <property type="project" value="UniProtKB"/>
</dbReference>
<dbReference type="GO" id="GO:0004930">
    <property type="term" value="F:G protein-coupled receptor activity"/>
    <property type="evidence" value="ECO:0000318"/>
    <property type="project" value="GO_Central"/>
</dbReference>
<dbReference type="GO" id="GO:0042802">
    <property type="term" value="F:identical protein binding"/>
    <property type="evidence" value="ECO:0000250"/>
    <property type="project" value="UniProtKB"/>
</dbReference>
<dbReference type="GO" id="GO:0007186">
    <property type="term" value="P:G protein-coupled receptor signaling pathway"/>
    <property type="evidence" value="ECO:0000318"/>
    <property type="project" value="GO_Central"/>
</dbReference>
<dbReference type="GO" id="GO:0038035">
    <property type="term" value="P:ligand-independent adenylate cyclase-activating G protein-coupled receptor signaling pathway"/>
    <property type="evidence" value="ECO:0000314"/>
    <property type="project" value="UniProtKB"/>
</dbReference>
<dbReference type="GO" id="GO:0050850">
    <property type="term" value="P:positive regulation of calcium-mediated signaling"/>
    <property type="evidence" value="ECO:0000314"/>
    <property type="project" value="UniProtKB"/>
</dbReference>
<dbReference type="CDD" id="cd15220">
    <property type="entry name" value="7tmA_GPR61_GPR62-like"/>
    <property type="match status" value="1"/>
</dbReference>
<dbReference type="FunFam" id="1.20.1070.10:FF:000374">
    <property type="entry name" value="probable G-protein coupled receptor 62"/>
    <property type="match status" value="1"/>
</dbReference>
<dbReference type="Gene3D" id="1.20.1070.10">
    <property type="entry name" value="Rhodopsin 7-helix transmembrane proteins"/>
    <property type="match status" value="1"/>
</dbReference>
<dbReference type="InterPro" id="IPR000276">
    <property type="entry name" value="GPCR_Rhodpsn"/>
</dbReference>
<dbReference type="InterPro" id="IPR017452">
    <property type="entry name" value="GPCR_Rhodpsn_7TM"/>
</dbReference>
<dbReference type="PANTHER" id="PTHR22752">
    <property type="entry name" value="G PROTEIN-COUPLED RECEPTOR"/>
    <property type="match status" value="1"/>
</dbReference>
<dbReference type="PANTHER" id="PTHR22752:SF11">
    <property type="entry name" value="G-PROTEIN COUPLED RECEPTOR 62"/>
    <property type="match status" value="1"/>
</dbReference>
<dbReference type="Pfam" id="PF00001">
    <property type="entry name" value="7tm_1"/>
    <property type="match status" value="1"/>
</dbReference>
<dbReference type="PRINTS" id="PR00237">
    <property type="entry name" value="GPCRRHODOPSN"/>
</dbReference>
<dbReference type="SUPFAM" id="SSF81321">
    <property type="entry name" value="Family A G protein-coupled receptor-like"/>
    <property type="match status" value="1"/>
</dbReference>
<dbReference type="PROSITE" id="PS50262">
    <property type="entry name" value="G_PROTEIN_RECEP_F1_2"/>
    <property type="match status" value="1"/>
</dbReference>
<sequence length="368" mass="37614">MANSTGLNASEVAGSLGLILAAVVEVGALLGNGALLVVVLRTPGLRDALYLAHLCVVDLLAAASIMPLGLLAAPPPGLGRVRLGPAPCRAARFLSAALLPACTLGVAALGLARYRLIVHPLRPGSRPPPVLVLTAVWAAAGLLGALSLLGTPPAPPPAPARCSVLAGGLGPFRPLWALLAFALPALLLLGAYGGIFVVARRAALRPPRPARGSRLHSDSLDSRLSILPPLRPRLPGGKAALAPALAVGQFAACWLPYGCACLAPAARAAEAEAAVTWVAYSAFAAHPFLYGLLQRPVRLALGRLSRRALPGPVRACTPQAWHPRALLQCLQRPPEGPAVGPSEAPEQTPELAGGRSPAYQGPPESSLS</sequence>
<gene>
    <name type="primary">GPR62</name>
</gene>
<accession>Q9BZJ7</accession>
<accession>F1DAM4</accession>
<accession>Q5KU27</accession>